<name>RBL_BARJA</name>
<sequence length="456" mass="50394">KAGVGFKAGVKDYRLTYYTPDYETKDTDILAAFRVTPQPGVPAEEAGAAVAAESSTGTWTTVWTDGLTSLDRYKGRCYHIEAVVGEENQFIAYVAYPLDLFEEGSVTNMFTSIVGNVFGFKALRALRLEDLRIPPSYSKTFQGPPHGIQVERDKLNKYGRPLLGCTIKPKLGLSAKNYGRAVYECLRGGLDFTKDDENVNSQPFMRWRDRFVFCAEAIYKAQAETGEIKGHYLNATAGTCEEMIKRAVFARELGAPIVMHDYLTGGFTANTSLAHYCRDNGLLLHIHRAMHAVIDRQKNHGMHFRVLAKALRMSGGDHIHAGTVVGKLEGEREMTLGFVDLLRDDFIEKDRSRGIFFTQDWVSMPGVIPVASGGIHVWHMPALTEIFGDDSVLQFGGGTLGHPWGNAPGAVANRVALEACVQARNEGRDLAREGNEIIREAAKWSPELAAACEVWK</sequence>
<keyword id="KW-0113">Calvin cycle</keyword>
<keyword id="KW-0120">Carbon dioxide fixation</keyword>
<keyword id="KW-0150">Chloroplast</keyword>
<keyword id="KW-1015">Disulfide bond</keyword>
<keyword id="KW-0456">Lyase</keyword>
<keyword id="KW-0460">Magnesium</keyword>
<keyword id="KW-0479">Metal-binding</keyword>
<keyword id="KW-0488">Methylation</keyword>
<keyword id="KW-0503">Monooxygenase</keyword>
<keyword id="KW-0560">Oxidoreductase</keyword>
<keyword id="KW-0601">Photorespiration</keyword>
<keyword id="KW-0602">Photosynthesis</keyword>
<keyword id="KW-0934">Plastid</keyword>
<comment type="function">
    <text evidence="1">RuBisCO catalyzes two reactions: the carboxylation of D-ribulose 1,5-bisphosphate, the primary event in carbon dioxide fixation, as well as the oxidative fragmentation of the pentose substrate in the photorespiration process. Both reactions occur simultaneously and in competition at the same active site.</text>
</comment>
<comment type="catalytic activity">
    <reaction evidence="1">
        <text>2 (2R)-3-phosphoglycerate + 2 H(+) = D-ribulose 1,5-bisphosphate + CO2 + H2O</text>
        <dbReference type="Rhea" id="RHEA:23124"/>
        <dbReference type="ChEBI" id="CHEBI:15377"/>
        <dbReference type="ChEBI" id="CHEBI:15378"/>
        <dbReference type="ChEBI" id="CHEBI:16526"/>
        <dbReference type="ChEBI" id="CHEBI:57870"/>
        <dbReference type="ChEBI" id="CHEBI:58272"/>
        <dbReference type="EC" id="4.1.1.39"/>
    </reaction>
</comment>
<comment type="catalytic activity">
    <reaction evidence="1">
        <text>D-ribulose 1,5-bisphosphate + O2 = 2-phosphoglycolate + (2R)-3-phosphoglycerate + 2 H(+)</text>
        <dbReference type="Rhea" id="RHEA:36631"/>
        <dbReference type="ChEBI" id="CHEBI:15378"/>
        <dbReference type="ChEBI" id="CHEBI:15379"/>
        <dbReference type="ChEBI" id="CHEBI:57870"/>
        <dbReference type="ChEBI" id="CHEBI:58033"/>
        <dbReference type="ChEBI" id="CHEBI:58272"/>
    </reaction>
</comment>
<comment type="cofactor">
    <cofactor evidence="1">
        <name>Mg(2+)</name>
        <dbReference type="ChEBI" id="CHEBI:18420"/>
    </cofactor>
    <text evidence="1">Binds 1 Mg(2+) ion per subunit.</text>
</comment>
<comment type="subunit">
    <text evidence="1">Heterohexadecamer of 8 large chains and 8 small chains; disulfide-linked. The disulfide link is formed within the large subunit homodimers.</text>
</comment>
<comment type="subcellular location">
    <subcellularLocation>
        <location>Plastid</location>
        <location>Chloroplast</location>
    </subcellularLocation>
</comment>
<comment type="PTM">
    <text evidence="1">The disulfide bond which can form in the large chain dimeric partners within the hexadecamer appears to be associated with oxidative stress and protein turnover.</text>
</comment>
<comment type="miscellaneous">
    <text evidence="1">The basic functional RuBisCO is composed of a large chain homodimer in a 'head-to-tail' conformation. In form I RuBisCO this homodimer is arranged in a barrel-like tetramer with the small subunits forming a tetrameric 'cap' on each end of the 'barrel'.</text>
</comment>
<comment type="similarity">
    <text evidence="1">Belongs to the RuBisCO large chain family. Type I subfamily.</text>
</comment>
<reference key="1">
    <citation type="journal article" date="1994" name="Plant Syst. Evol.">
        <title>Phylogenetic relationships among genera in the Liliaceae-Asparagoideae-Polygonatae s.l. inferred from rbcL gene sequence data.</title>
        <authorList>
            <person name="Shinwari Z.K."/>
            <person name="Kato H."/>
            <person name="Terauchi R."/>
            <person name="Kawano S."/>
        </authorList>
    </citation>
    <scope>NUCLEOTIDE SEQUENCE [GENOMIC DNA]</scope>
</reference>
<geneLocation type="chloroplast"/>
<gene>
    <name evidence="1" type="primary">rbcL</name>
</gene>
<organism>
    <name type="scientific">Barnardia japonica</name>
    <name type="common">Chinese squill</name>
    <name type="synonym">Scilla scilloides</name>
    <dbReference type="NCBI Taxonomy" id="49652"/>
    <lineage>
        <taxon>Eukaryota</taxon>
        <taxon>Viridiplantae</taxon>
        <taxon>Streptophyta</taxon>
        <taxon>Embryophyta</taxon>
        <taxon>Tracheophyta</taxon>
        <taxon>Spermatophyta</taxon>
        <taxon>Magnoliopsida</taxon>
        <taxon>Liliopsida</taxon>
        <taxon>Asparagales</taxon>
        <taxon>Hyacinthaceae</taxon>
        <taxon>Hyacinthoideae</taxon>
        <taxon>Hyacintheae</taxon>
        <taxon>Scilla</taxon>
    </lineage>
</organism>
<accession>Q33162</accession>
<proteinExistence type="inferred from homology"/>
<protein>
    <recommendedName>
        <fullName evidence="1">Ribulose bisphosphate carboxylase large chain</fullName>
        <shortName evidence="1">RuBisCO large subunit</shortName>
        <ecNumber evidence="1">4.1.1.39</ecNumber>
    </recommendedName>
</protein>
<feature type="chain" id="PRO_0000062590" description="Ribulose bisphosphate carboxylase large chain">
    <location>
        <begin position="1" status="less than"/>
        <end position="456" status="greater than"/>
    </location>
</feature>
<feature type="active site" description="Proton acceptor" evidence="1">
    <location>
        <position position="168"/>
    </location>
</feature>
<feature type="active site" description="Proton acceptor" evidence="1">
    <location>
        <position position="287"/>
    </location>
</feature>
<feature type="binding site" description="in homodimeric partner" evidence="1">
    <location>
        <position position="116"/>
    </location>
    <ligand>
        <name>substrate</name>
    </ligand>
</feature>
<feature type="binding site" evidence="1">
    <location>
        <position position="166"/>
    </location>
    <ligand>
        <name>substrate</name>
    </ligand>
</feature>
<feature type="binding site" evidence="1">
    <location>
        <position position="170"/>
    </location>
    <ligand>
        <name>substrate</name>
    </ligand>
</feature>
<feature type="binding site" description="via carbamate group" evidence="1">
    <location>
        <position position="194"/>
    </location>
    <ligand>
        <name>Mg(2+)</name>
        <dbReference type="ChEBI" id="CHEBI:18420"/>
    </ligand>
</feature>
<feature type="binding site" evidence="1">
    <location>
        <position position="196"/>
    </location>
    <ligand>
        <name>Mg(2+)</name>
        <dbReference type="ChEBI" id="CHEBI:18420"/>
    </ligand>
</feature>
<feature type="binding site" evidence="1">
    <location>
        <position position="197"/>
    </location>
    <ligand>
        <name>Mg(2+)</name>
        <dbReference type="ChEBI" id="CHEBI:18420"/>
    </ligand>
</feature>
<feature type="binding site" evidence="1">
    <location>
        <position position="288"/>
    </location>
    <ligand>
        <name>substrate</name>
    </ligand>
</feature>
<feature type="binding site" evidence="1">
    <location>
        <position position="320"/>
    </location>
    <ligand>
        <name>substrate</name>
    </ligand>
</feature>
<feature type="binding site" evidence="1">
    <location>
        <position position="372"/>
    </location>
    <ligand>
        <name>substrate</name>
    </ligand>
</feature>
<feature type="site" description="Transition state stabilizer" evidence="1">
    <location>
        <position position="327"/>
    </location>
</feature>
<feature type="modified residue" description="N6,N6,N6-trimethyllysine" evidence="1">
    <location>
        <position position="7"/>
    </location>
</feature>
<feature type="modified residue" description="N6-carboxylysine" evidence="1">
    <location>
        <position position="194"/>
    </location>
</feature>
<feature type="disulfide bond" description="Interchain; in linked form" evidence="1">
    <location>
        <position position="240"/>
    </location>
</feature>
<feature type="non-terminal residue">
    <location>
        <position position="1"/>
    </location>
</feature>
<feature type="non-terminal residue">
    <location>
        <position position="456"/>
    </location>
</feature>
<dbReference type="EC" id="4.1.1.39" evidence="1"/>
<dbReference type="EMBL" id="D28161">
    <property type="protein sequence ID" value="BAA05689.1"/>
    <property type="molecule type" value="Genomic_DNA"/>
</dbReference>
<dbReference type="SMR" id="Q33162"/>
<dbReference type="GO" id="GO:0009507">
    <property type="term" value="C:chloroplast"/>
    <property type="evidence" value="ECO:0007669"/>
    <property type="project" value="UniProtKB-SubCell"/>
</dbReference>
<dbReference type="GO" id="GO:0000287">
    <property type="term" value="F:magnesium ion binding"/>
    <property type="evidence" value="ECO:0007669"/>
    <property type="project" value="InterPro"/>
</dbReference>
<dbReference type="GO" id="GO:0004497">
    <property type="term" value="F:monooxygenase activity"/>
    <property type="evidence" value="ECO:0007669"/>
    <property type="project" value="UniProtKB-KW"/>
</dbReference>
<dbReference type="GO" id="GO:0016984">
    <property type="term" value="F:ribulose-bisphosphate carboxylase activity"/>
    <property type="evidence" value="ECO:0007669"/>
    <property type="project" value="UniProtKB-EC"/>
</dbReference>
<dbReference type="GO" id="GO:0009853">
    <property type="term" value="P:photorespiration"/>
    <property type="evidence" value="ECO:0007669"/>
    <property type="project" value="UniProtKB-KW"/>
</dbReference>
<dbReference type="GO" id="GO:0019253">
    <property type="term" value="P:reductive pentose-phosphate cycle"/>
    <property type="evidence" value="ECO:0007669"/>
    <property type="project" value="UniProtKB-KW"/>
</dbReference>
<dbReference type="CDD" id="cd08212">
    <property type="entry name" value="RuBisCO_large_I"/>
    <property type="match status" value="1"/>
</dbReference>
<dbReference type="FunFam" id="3.20.20.110:FF:000001">
    <property type="entry name" value="Ribulose bisphosphate carboxylase large chain"/>
    <property type="match status" value="1"/>
</dbReference>
<dbReference type="FunFam" id="3.30.70.150:FF:000001">
    <property type="entry name" value="Ribulose bisphosphate carboxylase large chain"/>
    <property type="match status" value="1"/>
</dbReference>
<dbReference type="Gene3D" id="3.20.20.110">
    <property type="entry name" value="Ribulose bisphosphate carboxylase, large subunit, C-terminal domain"/>
    <property type="match status" value="1"/>
</dbReference>
<dbReference type="Gene3D" id="3.30.70.150">
    <property type="entry name" value="RuBisCO large subunit, N-terminal domain"/>
    <property type="match status" value="1"/>
</dbReference>
<dbReference type="HAMAP" id="MF_01338">
    <property type="entry name" value="RuBisCO_L_type1"/>
    <property type="match status" value="1"/>
</dbReference>
<dbReference type="InterPro" id="IPR033966">
    <property type="entry name" value="RuBisCO"/>
</dbReference>
<dbReference type="InterPro" id="IPR020878">
    <property type="entry name" value="RuBisCo_large_chain_AS"/>
</dbReference>
<dbReference type="InterPro" id="IPR000685">
    <property type="entry name" value="RuBisCO_lsu_C"/>
</dbReference>
<dbReference type="InterPro" id="IPR036376">
    <property type="entry name" value="RuBisCO_lsu_C_sf"/>
</dbReference>
<dbReference type="InterPro" id="IPR017443">
    <property type="entry name" value="RuBisCO_lsu_fd_N"/>
</dbReference>
<dbReference type="InterPro" id="IPR036422">
    <property type="entry name" value="RuBisCO_lsu_N_sf"/>
</dbReference>
<dbReference type="InterPro" id="IPR020888">
    <property type="entry name" value="RuBisCO_lsuI"/>
</dbReference>
<dbReference type="NCBIfam" id="NF003252">
    <property type="entry name" value="PRK04208.1"/>
    <property type="match status" value="1"/>
</dbReference>
<dbReference type="PANTHER" id="PTHR42704">
    <property type="entry name" value="RIBULOSE BISPHOSPHATE CARBOXYLASE"/>
    <property type="match status" value="1"/>
</dbReference>
<dbReference type="PANTHER" id="PTHR42704:SF16">
    <property type="entry name" value="RIBULOSE BISPHOSPHATE CARBOXYLASE LARGE CHAIN"/>
    <property type="match status" value="1"/>
</dbReference>
<dbReference type="Pfam" id="PF00016">
    <property type="entry name" value="RuBisCO_large"/>
    <property type="match status" value="1"/>
</dbReference>
<dbReference type="Pfam" id="PF02788">
    <property type="entry name" value="RuBisCO_large_N"/>
    <property type="match status" value="1"/>
</dbReference>
<dbReference type="SFLD" id="SFLDG01052">
    <property type="entry name" value="RuBisCO"/>
    <property type="match status" value="1"/>
</dbReference>
<dbReference type="SFLD" id="SFLDS00014">
    <property type="entry name" value="RuBisCO"/>
    <property type="match status" value="1"/>
</dbReference>
<dbReference type="SFLD" id="SFLDG00301">
    <property type="entry name" value="RuBisCO-like_proteins"/>
    <property type="match status" value="1"/>
</dbReference>
<dbReference type="SUPFAM" id="SSF51649">
    <property type="entry name" value="RuBisCo, C-terminal domain"/>
    <property type="match status" value="1"/>
</dbReference>
<dbReference type="SUPFAM" id="SSF54966">
    <property type="entry name" value="RuBisCO, large subunit, small (N-terminal) domain"/>
    <property type="match status" value="1"/>
</dbReference>
<dbReference type="PROSITE" id="PS00157">
    <property type="entry name" value="RUBISCO_LARGE"/>
    <property type="match status" value="1"/>
</dbReference>
<evidence type="ECO:0000255" key="1">
    <source>
        <dbReference type="HAMAP-Rule" id="MF_01338"/>
    </source>
</evidence>